<dbReference type="EMBL" id="U00792">
    <property type="protein sequence ID" value="AAC43250.1"/>
    <property type="molecule type" value="Unassigned_DNA"/>
</dbReference>
<dbReference type="RefSeq" id="WP_032490787.1">
    <property type="nucleotide sequence ID" value="NG_048193.1"/>
</dbReference>
<dbReference type="SMR" id="P51564"/>
<dbReference type="KEGG" id="ag:AAC43250"/>
<dbReference type="GO" id="GO:0005886">
    <property type="term" value="C:plasma membrane"/>
    <property type="evidence" value="ECO:0007669"/>
    <property type="project" value="UniProtKB-SubCell"/>
</dbReference>
<dbReference type="GO" id="GO:0015297">
    <property type="term" value="F:antiporter activity"/>
    <property type="evidence" value="ECO:0007669"/>
    <property type="project" value="UniProtKB-KW"/>
</dbReference>
<dbReference type="GO" id="GO:1902600">
    <property type="term" value="P:proton transmembrane transport"/>
    <property type="evidence" value="ECO:0007669"/>
    <property type="project" value="UniProtKB-KW"/>
</dbReference>
<dbReference type="GO" id="GO:0046677">
    <property type="term" value="P:response to antibiotic"/>
    <property type="evidence" value="ECO:0007669"/>
    <property type="project" value="UniProtKB-KW"/>
</dbReference>
<dbReference type="CDD" id="cd17388">
    <property type="entry name" value="MFS_TetA"/>
    <property type="match status" value="1"/>
</dbReference>
<dbReference type="Gene3D" id="1.20.1250.20">
    <property type="entry name" value="MFS general substrate transporter like domains"/>
    <property type="match status" value="1"/>
</dbReference>
<dbReference type="InterPro" id="IPR011701">
    <property type="entry name" value="MFS"/>
</dbReference>
<dbReference type="InterPro" id="IPR020846">
    <property type="entry name" value="MFS_dom"/>
</dbReference>
<dbReference type="InterPro" id="IPR036259">
    <property type="entry name" value="MFS_trans_sf"/>
</dbReference>
<dbReference type="InterPro" id="IPR005829">
    <property type="entry name" value="Sugar_transporter_CS"/>
</dbReference>
<dbReference type="InterPro" id="IPR001958">
    <property type="entry name" value="Tet-R_TetA/multi-R_MdtG-like"/>
</dbReference>
<dbReference type="NCBIfam" id="NF012174">
    <property type="entry name" value="tet_MFS_A_B_C_D"/>
    <property type="match status" value="1"/>
</dbReference>
<dbReference type="NCBIfam" id="NF012195">
    <property type="entry name" value="tet_MFS_H"/>
    <property type="match status" value="1"/>
</dbReference>
<dbReference type="NCBIfam" id="NF012207">
    <property type="entry name" value="tet_MFS_H_J"/>
    <property type="match status" value="1"/>
</dbReference>
<dbReference type="PANTHER" id="PTHR23507:SF1">
    <property type="entry name" value="FI18259P1-RELATED"/>
    <property type="match status" value="1"/>
</dbReference>
<dbReference type="PANTHER" id="PTHR23507">
    <property type="entry name" value="ZGC:174356"/>
    <property type="match status" value="1"/>
</dbReference>
<dbReference type="Pfam" id="PF07690">
    <property type="entry name" value="MFS_1"/>
    <property type="match status" value="1"/>
</dbReference>
<dbReference type="PRINTS" id="PR01035">
    <property type="entry name" value="TCRTETA"/>
</dbReference>
<dbReference type="SUPFAM" id="SSF103473">
    <property type="entry name" value="MFS general substrate transporter"/>
    <property type="match status" value="1"/>
</dbReference>
<dbReference type="PROSITE" id="PS50850">
    <property type="entry name" value="MFS"/>
    <property type="match status" value="1"/>
</dbReference>
<dbReference type="PROSITE" id="PS00216">
    <property type="entry name" value="SUGAR_TRANSPORT_1"/>
    <property type="match status" value="1"/>
</dbReference>
<accession>P51564</accession>
<comment type="function">
    <text>Resistance to tetracycline by an active tetracycline efflux. This is an energy-dependent process that decreases the accumulation of the antibiotic in whole cells. This protein functions as a metal-tetracycline/H(+) antiporter.</text>
</comment>
<comment type="subcellular location">
    <subcellularLocation>
        <location>Cell inner membrane</location>
        <topology>Multi-pass membrane protein</topology>
    </subcellularLocation>
</comment>
<comment type="similarity">
    <text evidence="2">Belongs to the major facilitator superfamily. TCR/Tet family.</text>
</comment>
<gene>
    <name type="primary">tetA</name>
</gene>
<feature type="chain" id="PRO_0000173398" description="Tetracycline resistance protein, class H">
    <location>
        <begin position="1"/>
        <end position="400"/>
    </location>
</feature>
<feature type="transmembrane region" description="Helical" evidence="1">
    <location>
        <begin position="5"/>
        <end position="25"/>
    </location>
</feature>
<feature type="transmembrane region" description="Helical" evidence="1">
    <location>
        <begin position="42"/>
        <end position="62"/>
    </location>
</feature>
<feature type="transmembrane region" description="Helical" evidence="1">
    <location>
        <begin position="72"/>
        <end position="92"/>
    </location>
</feature>
<feature type="transmembrane region" description="Helical" evidence="1">
    <location>
        <begin position="94"/>
        <end position="114"/>
    </location>
</feature>
<feature type="transmembrane region" description="Helical" evidence="1">
    <location>
        <begin position="131"/>
        <end position="151"/>
    </location>
</feature>
<feature type="transmembrane region" description="Helical" evidence="1">
    <location>
        <begin position="159"/>
        <end position="179"/>
    </location>
</feature>
<feature type="transmembrane region" description="Helical" evidence="1">
    <location>
        <begin position="215"/>
        <end position="235"/>
    </location>
</feature>
<feature type="transmembrane region" description="Helical" evidence="1">
    <location>
        <begin position="247"/>
        <end position="267"/>
    </location>
</feature>
<feature type="transmembrane region" description="Helical" evidence="1">
    <location>
        <begin position="291"/>
        <end position="311"/>
    </location>
</feature>
<feature type="transmembrane region" description="Helical" evidence="1">
    <location>
        <begin position="337"/>
        <end position="357"/>
    </location>
</feature>
<feature type="transmembrane region" description="Helical" evidence="1">
    <location>
        <begin position="362"/>
        <end position="382"/>
    </location>
</feature>
<organism>
    <name type="scientific">Pasteurella multocida</name>
    <dbReference type="NCBI Taxonomy" id="747"/>
    <lineage>
        <taxon>Bacteria</taxon>
        <taxon>Pseudomonadati</taxon>
        <taxon>Pseudomonadota</taxon>
        <taxon>Gammaproteobacteria</taxon>
        <taxon>Pasteurellales</taxon>
        <taxon>Pasteurellaceae</taxon>
        <taxon>Pasteurella</taxon>
    </lineage>
</organism>
<keyword id="KW-0046">Antibiotic resistance</keyword>
<keyword id="KW-0050">Antiport</keyword>
<keyword id="KW-0997">Cell inner membrane</keyword>
<keyword id="KW-1003">Cell membrane</keyword>
<keyword id="KW-0375">Hydrogen ion transport</keyword>
<keyword id="KW-0406">Ion transport</keyword>
<keyword id="KW-0472">Membrane</keyword>
<keyword id="KW-0614">Plasmid</keyword>
<keyword id="KW-0812">Transmembrane</keyword>
<keyword id="KW-1133">Transmembrane helix</keyword>
<keyword id="KW-0813">Transport</keyword>
<name>TCR8_PASMD</name>
<geneLocation type="plasmid">
    <name>pVM111</name>
</geneLocation>
<evidence type="ECO:0000255" key="1"/>
<evidence type="ECO:0000305" key="2"/>
<reference key="1">
    <citation type="journal article" date="1993" name="Antimicrob. Agents Chemother.">
        <title>A new tetracycline resistance determinant, Tet H, from Pasteurella multocida specifying active efflux of tetracycline.</title>
        <authorList>
            <person name="Hansen L.M."/>
            <person name="McMurry L.M."/>
            <person name="Levy S.B."/>
            <person name="Hirsh D.C."/>
        </authorList>
    </citation>
    <scope>NUCLEOTIDE SEQUENCE [GENOMIC DNA]</scope>
    <source>
        <strain>P2862</strain>
    </source>
</reference>
<protein>
    <recommendedName>
        <fullName>Tetracycline resistance protein, class H</fullName>
        <shortName>TetA(H)</shortName>
    </recommendedName>
</protein>
<sequence>MNKSIIIILLITVLDAIGIGLIMPVLPTLLNEFVSENSLATHYGVLLALYATMQVIFAPILGRLSDKYGRKPILLFSLLGAALDYLLMAFSTTLWMLYIGRIIAGITGATGAVCASAMSDVTPAKNRTRYFGFLGGVFGVGLIIGPMLGGLLGDISAHMPFIFAAISHSILLILSLLFFRETQKREALVANRTPENQTASNTVTVFFKKSLYFWLATYFIIQLIGQIPATIWVLFTQYRFDWNTTSIGMSLAVLGVLHIFFQAIVAGKLAQKWGEKTTIMISMSIDMMGCLLLAWIGHVWVILPALICLAAGGMGQPALQGYLSKSVDDNAQGKLQGTLVSLTNITGIIGPLLFAFIYSYSVAYWDGLLWLMGAILYAMLLITAYFHQRKTTPKAVISTP</sequence>
<proteinExistence type="inferred from homology"/>